<accession>P55068</accession>
<accession>Q62860</accession>
<accession>Q63040</accession>
<accession>Q63513</accession>
<evidence type="ECO:0000250" key="1"/>
<evidence type="ECO:0000250" key="2">
    <source>
        <dbReference type="UniProtKB" id="Q96GW7"/>
    </source>
</evidence>
<evidence type="ECO:0000255" key="3"/>
<evidence type="ECO:0000255" key="4">
    <source>
        <dbReference type="PROSITE-ProRule" id="PRU00040"/>
    </source>
</evidence>
<evidence type="ECO:0000255" key="5">
    <source>
        <dbReference type="PROSITE-ProRule" id="PRU00076"/>
    </source>
</evidence>
<evidence type="ECO:0000255" key="6">
    <source>
        <dbReference type="PROSITE-ProRule" id="PRU00302"/>
    </source>
</evidence>
<evidence type="ECO:0000255" key="7">
    <source>
        <dbReference type="PROSITE-ProRule" id="PRU00323"/>
    </source>
</evidence>
<evidence type="ECO:0000256" key="8">
    <source>
        <dbReference type="SAM" id="MobiDB-lite"/>
    </source>
</evidence>
<evidence type="ECO:0000269" key="9">
    <source>
    </source>
</evidence>
<evidence type="ECO:0000305" key="10"/>
<evidence type="ECO:0000305" key="11">
    <source>
    </source>
</evidence>
<evidence type="ECO:0007744" key="12">
    <source>
    </source>
</evidence>
<gene>
    <name type="primary">Bcan</name>
    <name type="synonym">Behab</name>
</gene>
<feature type="signal peptide" evidence="3">
    <location>
        <begin position="1"/>
        <end position="22"/>
    </location>
</feature>
<feature type="chain" id="PRO_0000017513" description="Brevican core protein">
    <location>
        <begin position="23"/>
        <end position="883"/>
    </location>
</feature>
<feature type="domain" description="Ig-like V-type">
    <location>
        <begin position="35"/>
        <end position="154"/>
    </location>
</feature>
<feature type="domain" description="Link 1" evidence="7">
    <location>
        <begin position="156"/>
        <end position="251"/>
    </location>
</feature>
<feature type="domain" description="Link 2" evidence="7">
    <location>
        <begin position="256"/>
        <end position="353"/>
    </location>
</feature>
<feature type="domain" description="EGF-like" evidence="5">
    <location>
        <begin position="622"/>
        <end position="658"/>
    </location>
</feature>
<feature type="domain" description="C-type lectin" evidence="4">
    <location>
        <begin position="658"/>
        <end position="786"/>
    </location>
</feature>
<feature type="domain" description="Sushi" evidence="6">
    <location>
        <begin position="789"/>
        <end position="849"/>
    </location>
</feature>
<feature type="region of interest" description="Disordered" evidence="8">
    <location>
        <begin position="389"/>
        <end position="574"/>
    </location>
</feature>
<feature type="region of interest" description="Disordered" evidence="8">
    <location>
        <begin position="859"/>
        <end position="883"/>
    </location>
</feature>
<feature type="compositionally biased region" description="Polar residues" evidence="8">
    <location>
        <begin position="428"/>
        <end position="440"/>
    </location>
</feature>
<feature type="compositionally biased region" description="Acidic residues" evidence="8">
    <location>
        <begin position="441"/>
        <end position="451"/>
    </location>
</feature>
<feature type="compositionally biased region" description="Basic and acidic residues" evidence="8">
    <location>
        <begin position="452"/>
        <end position="467"/>
    </location>
</feature>
<feature type="modified residue" description="Phosphoserine" evidence="12">
    <location>
        <position position="413"/>
    </location>
</feature>
<feature type="glycosylation site" description="N-linked (GlcNAc...) asparagine" evidence="3">
    <location>
        <position position="129"/>
    </location>
</feature>
<feature type="glycosylation site" description="N-linked (GlcNAc...) asparagine" evidence="3">
    <location>
        <position position="336"/>
    </location>
</feature>
<feature type="glycosylation site" description="O-linked (Xyl...) (chondroitin sulfate) serine" evidence="2">
    <location>
        <position position="413"/>
    </location>
</feature>
<feature type="disulfide bond" evidence="1">
    <location>
        <begin position="56"/>
        <end position="136"/>
    </location>
</feature>
<feature type="disulfide bond" evidence="1">
    <location>
        <begin position="178"/>
        <end position="249"/>
    </location>
</feature>
<feature type="disulfide bond" evidence="1">
    <location>
        <begin position="202"/>
        <end position="223"/>
    </location>
</feature>
<feature type="disulfide bond" evidence="1">
    <location>
        <begin position="276"/>
        <end position="351"/>
    </location>
</feature>
<feature type="disulfide bond" evidence="1">
    <location>
        <begin position="300"/>
        <end position="321"/>
    </location>
</feature>
<feature type="disulfide bond" evidence="1">
    <location>
        <begin position="626"/>
        <end position="637"/>
    </location>
</feature>
<feature type="disulfide bond" evidence="1">
    <location>
        <begin position="631"/>
        <end position="646"/>
    </location>
</feature>
<feature type="disulfide bond" evidence="1">
    <location>
        <begin position="648"/>
        <end position="657"/>
    </location>
</feature>
<feature type="disulfide bond" evidence="1">
    <location>
        <begin position="692"/>
        <end position="784"/>
    </location>
</feature>
<feature type="disulfide bond" evidence="1">
    <location>
        <begin position="760"/>
        <end position="776"/>
    </location>
</feature>
<feature type="disulfide bond" evidence="1">
    <location>
        <begin position="791"/>
        <end position="834"/>
    </location>
</feature>
<feature type="disulfide bond" evidence="1">
    <location>
        <begin position="820"/>
        <end position="847"/>
    </location>
</feature>
<feature type="splice variant" id="VSP_003076" description="In isoform 2." evidence="10">
    <original>DCIPSPCHNGGTCLEEKEGFR</original>
    <variation>NSAEGSMPAFLLFLLLQLWDT</variation>
    <location>
        <begin position="625"/>
        <end position="645"/>
    </location>
</feature>
<feature type="splice variant" id="VSP_003077" description="In isoform 2." evidence="10">
    <location>
        <begin position="646"/>
        <end position="883"/>
    </location>
</feature>
<feature type="sequence conflict" description="In Ref. 4; CAA82215." evidence="10" ref="4">
    <original>AL</original>
    <variation>WV</variation>
    <location>
        <begin position="51"/>
        <end position="52"/>
    </location>
</feature>
<feature type="sequence conflict" description="In Ref. 2; AAA87847." evidence="10" ref="2">
    <original>V</original>
    <variation>L</variation>
    <location>
        <position position="503"/>
    </location>
</feature>
<feature type="sequence conflict" description="In Ref. 2; AAA87847." evidence="10" ref="2">
    <original>TV</original>
    <variation>PA</variation>
    <location>
        <begin position="518"/>
        <end position="519"/>
    </location>
</feature>
<feature type="sequence conflict" description="In Ref. 2; AAA87847." evidence="10" ref="2">
    <original>G</original>
    <variation>R</variation>
    <location>
        <position position="526"/>
    </location>
</feature>
<feature type="sequence conflict" description="In Ref. 2; AAA87847." evidence="10" ref="2">
    <original>G</original>
    <variation>A</variation>
    <location>
        <position position="541"/>
    </location>
</feature>
<feature type="sequence conflict" description="In Ref. 2; AAA87847." evidence="10" ref="2">
    <original>R</original>
    <variation>S</variation>
    <location>
        <position position="556"/>
    </location>
</feature>
<feature type="sequence conflict" description="In Ref. 2; AAA87847." evidence="10" ref="2">
    <original>E</original>
    <variation>A</variation>
    <location>
        <position position="573"/>
    </location>
</feature>
<feature type="sequence conflict" description="In Ref. 2; AAA87847." evidence="10" ref="2">
    <original>V</original>
    <variation>L</variation>
    <location>
        <position position="583"/>
    </location>
</feature>
<feature type="sequence conflict" description="In Ref. 2; AAA87847." evidence="10" ref="2">
    <original>V</original>
    <variation>L</variation>
    <location>
        <position position="649"/>
    </location>
</feature>
<feature type="sequence conflict" description="In Ref. 2; AAA87847." evidence="10" ref="2">
    <original>P</original>
    <variation>A</variation>
    <location>
        <position position="670"/>
    </location>
</feature>
<feature type="sequence conflict" description="In Ref. 2; AAA87847." evidence="10" ref="2">
    <original>P</original>
    <variation>A</variation>
    <location>
        <position position="738"/>
    </location>
</feature>
<feature type="sequence conflict" description="In Ref. 2; AAA87847." evidence="10" ref="2">
    <original>R</original>
    <variation>A</variation>
    <location>
        <position position="809"/>
    </location>
</feature>
<feature type="lipid moiety-binding region" description="GPI-anchor amidated serine" evidence="11">
    <location sequence="P55068-2">
        <position position="622"/>
    </location>
</feature>
<proteinExistence type="evidence at protein level"/>
<dbReference type="EMBL" id="X79881">
    <property type="protein sequence ID" value="CAA56255.1"/>
    <property type="molecule type" value="mRNA"/>
</dbReference>
<dbReference type="EMBL" id="X86406">
    <property type="protein sequence ID" value="CAA60160.1"/>
    <property type="molecule type" value="mRNA"/>
</dbReference>
<dbReference type="EMBL" id="U37142">
    <property type="protein sequence ID" value="AAA87847.1"/>
    <property type="molecule type" value="mRNA"/>
</dbReference>
<dbReference type="EMBL" id="Z28366">
    <property type="protein sequence ID" value="CAA82215.1"/>
    <property type="status" value="ALT_FRAME"/>
    <property type="molecule type" value="mRNA"/>
</dbReference>
<dbReference type="PIR" id="A53908">
    <property type="entry name" value="A53908"/>
</dbReference>
<dbReference type="PIR" id="S49126">
    <property type="entry name" value="S49126"/>
</dbReference>
<dbReference type="RefSeq" id="NP_001028837.1">
    <property type="nucleotide sequence ID" value="NM_001033665.1"/>
</dbReference>
<dbReference type="RefSeq" id="NP_037048.2">
    <property type="nucleotide sequence ID" value="NM_012916.2"/>
</dbReference>
<dbReference type="SMR" id="P55068"/>
<dbReference type="BioGRID" id="247431">
    <property type="interactions" value="2"/>
</dbReference>
<dbReference type="FunCoup" id="P55068">
    <property type="interactions" value="1000"/>
</dbReference>
<dbReference type="IntAct" id="P55068">
    <property type="interactions" value="1"/>
</dbReference>
<dbReference type="MINT" id="P55068"/>
<dbReference type="STRING" id="10116.ENSRNOP00000025496"/>
<dbReference type="GlyCosmos" id="P55068">
    <property type="glycosylation" value="2 sites, No reported glycans"/>
</dbReference>
<dbReference type="GlyGen" id="P55068">
    <property type="glycosylation" value="3 sites"/>
</dbReference>
<dbReference type="iPTMnet" id="P55068"/>
<dbReference type="PhosphoSitePlus" id="P55068"/>
<dbReference type="SwissPalm" id="P55068"/>
<dbReference type="PaxDb" id="10116-ENSRNOP00000025496"/>
<dbReference type="ABCD" id="P55068">
    <property type="antibodies" value="2 sequenced antibodies"/>
</dbReference>
<dbReference type="GeneID" id="25393"/>
<dbReference type="KEGG" id="rno:25393"/>
<dbReference type="UCSC" id="RGD:2194">
    <molecule id="P55068-1"/>
    <property type="organism name" value="rat"/>
</dbReference>
<dbReference type="AGR" id="RGD:2194"/>
<dbReference type="CTD" id="63827"/>
<dbReference type="RGD" id="2194">
    <property type="gene designation" value="Bcan"/>
</dbReference>
<dbReference type="eggNOG" id="KOG4297">
    <property type="taxonomic scope" value="Eukaryota"/>
</dbReference>
<dbReference type="InParanoid" id="P55068"/>
<dbReference type="PhylomeDB" id="P55068"/>
<dbReference type="Reactome" id="R-RNO-1474228">
    <property type="pathway name" value="Degradation of the extracellular matrix"/>
</dbReference>
<dbReference type="Reactome" id="R-RNO-1971475">
    <property type="pathway name" value="A tetrasaccharide linker sequence is required for GAG synthesis"/>
</dbReference>
<dbReference type="Reactome" id="R-RNO-2022870">
    <property type="pathway name" value="Chondroitin sulfate biosynthesis"/>
</dbReference>
<dbReference type="Reactome" id="R-RNO-2022923">
    <property type="pathway name" value="Dermatan sulfate biosynthesis"/>
</dbReference>
<dbReference type="Reactome" id="R-RNO-2024101">
    <property type="pathway name" value="CS/DS degradation"/>
</dbReference>
<dbReference type="Reactome" id="R-RNO-3000178">
    <property type="pathway name" value="ECM proteoglycans"/>
</dbReference>
<dbReference type="PRO" id="PR:P55068"/>
<dbReference type="Proteomes" id="UP000002494">
    <property type="component" value="Unplaced"/>
</dbReference>
<dbReference type="GO" id="GO:0030424">
    <property type="term" value="C:axon"/>
    <property type="evidence" value="ECO:0000314"/>
    <property type="project" value="RGD"/>
</dbReference>
<dbReference type="GO" id="GO:0043194">
    <property type="term" value="C:axon initial segment"/>
    <property type="evidence" value="ECO:0000314"/>
    <property type="project" value="RGD"/>
</dbReference>
<dbReference type="GO" id="GO:0009986">
    <property type="term" value="C:cell surface"/>
    <property type="evidence" value="ECO:0000314"/>
    <property type="project" value="RGD"/>
</dbReference>
<dbReference type="GO" id="GO:0030425">
    <property type="term" value="C:dendrite"/>
    <property type="evidence" value="ECO:0000314"/>
    <property type="project" value="RGD"/>
</dbReference>
<dbReference type="GO" id="GO:0031012">
    <property type="term" value="C:extracellular matrix"/>
    <property type="evidence" value="ECO:0000266"/>
    <property type="project" value="RGD"/>
</dbReference>
<dbReference type="GO" id="GO:0005615">
    <property type="term" value="C:extracellular space"/>
    <property type="evidence" value="ECO:0000314"/>
    <property type="project" value="RGD"/>
</dbReference>
<dbReference type="GO" id="GO:0098982">
    <property type="term" value="C:GABA-ergic synapse"/>
    <property type="evidence" value="ECO:0000314"/>
    <property type="project" value="SynGO"/>
</dbReference>
<dbReference type="GO" id="GO:0098978">
    <property type="term" value="C:glutamatergic synapse"/>
    <property type="evidence" value="ECO:0000314"/>
    <property type="project" value="SynGO"/>
</dbReference>
<dbReference type="GO" id="GO:0033268">
    <property type="term" value="C:node of Ranvier"/>
    <property type="evidence" value="ECO:0000314"/>
    <property type="project" value="RGD"/>
</dbReference>
<dbReference type="GO" id="GO:0072534">
    <property type="term" value="C:perineuronal net"/>
    <property type="evidence" value="ECO:0000314"/>
    <property type="project" value="RGD"/>
</dbReference>
<dbReference type="GO" id="GO:0098966">
    <property type="term" value="C:perisynaptic extracellular matrix"/>
    <property type="evidence" value="ECO:0000314"/>
    <property type="project" value="SynGO"/>
</dbReference>
<dbReference type="GO" id="GO:0098552">
    <property type="term" value="C:side of membrane"/>
    <property type="evidence" value="ECO:0007669"/>
    <property type="project" value="UniProtKB-KW"/>
</dbReference>
<dbReference type="GO" id="GO:0045202">
    <property type="term" value="C:synapse"/>
    <property type="evidence" value="ECO:0000318"/>
    <property type="project" value="GO_Central"/>
</dbReference>
<dbReference type="GO" id="GO:0097060">
    <property type="term" value="C:synaptic membrane"/>
    <property type="evidence" value="ECO:0000314"/>
    <property type="project" value="RGD"/>
</dbReference>
<dbReference type="GO" id="GO:0030246">
    <property type="term" value="F:carbohydrate binding"/>
    <property type="evidence" value="ECO:0007669"/>
    <property type="project" value="UniProtKB-KW"/>
</dbReference>
<dbReference type="GO" id="GO:0005540">
    <property type="term" value="F:hyaluronic acid binding"/>
    <property type="evidence" value="ECO:0007669"/>
    <property type="project" value="UniProtKB-KW"/>
</dbReference>
<dbReference type="GO" id="GO:0007160">
    <property type="term" value="P:cell-matrix adhesion"/>
    <property type="evidence" value="ECO:0000314"/>
    <property type="project" value="RGD"/>
</dbReference>
<dbReference type="GO" id="GO:0007417">
    <property type="term" value="P:central nervous system development"/>
    <property type="evidence" value="ECO:0000318"/>
    <property type="project" value="GO_Central"/>
</dbReference>
<dbReference type="GO" id="GO:0042063">
    <property type="term" value="P:gliogenesis"/>
    <property type="evidence" value="ECO:0000270"/>
    <property type="project" value="RGD"/>
</dbReference>
<dbReference type="GO" id="GO:0021766">
    <property type="term" value="P:hippocampus development"/>
    <property type="evidence" value="ECO:0000266"/>
    <property type="project" value="RGD"/>
</dbReference>
<dbReference type="GO" id="GO:1990138">
    <property type="term" value="P:neuron projection extension"/>
    <property type="evidence" value="ECO:0000314"/>
    <property type="project" value="RGD"/>
</dbReference>
<dbReference type="GO" id="GO:0048168">
    <property type="term" value="P:regulation of neuronal synaptic plasticity"/>
    <property type="evidence" value="ECO:0000270"/>
    <property type="project" value="RGD"/>
</dbReference>
<dbReference type="GO" id="GO:0001501">
    <property type="term" value="P:skeletal system development"/>
    <property type="evidence" value="ECO:0000318"/>
    <property type="project" value="GO_Central"/>
</dbReference>
<dbReference type="GO" id="GO:0060074">
    <property type="term" value="P:synapse maturation"/>
    <property type="evidence" value="ECO:0000266"/>
    <property type="project" value="RGD"/>
</dbReference>
<dbReference type="CDD" id="cd00033">
    <property type="entry name" value="CCP"/>
    <property type="match status" value="1"/>
</dbReference>
<dbReference type="CDD" id="cd00054">
    <property type="entry name" value="EGF_CA"/>
    <property type="match status" value="1"/>
</dbReference>
<dbReference type="CDD" id="cd03517">
    <property type="entry name" value="Link_domain_CSPGs_modules_1_3"/>
    <property type="match status" value="1"/>
</dbReference>
<dbReference type="CDD" id="cd03520">
    <property type="entry name" value="Link_domain_CSPGs_modules_2_4"/>
    <property type="match status" value="1"/>
</dbReference>
<dbReference type="FunFam" id="3.10.100.10:FF:000011">
    <property type="entry name" value="Aggrecan core protein"/>
    <property type="match status" value="1"/>
</dbReference>
<dbReference type="FunFam" id="2.60.40.10:FF:000698">
    <property type="entry name" value="brevican core protein"/>
    <property type="match status" value="1"/>
</dbReference>
<dbReference type="FunFam" id="2.10.25.10:FF:000230">
    <property type="entry name" value="Delta-like protein"/>
    <property type="match status" value="1"/>
</dbReference>
<dbReference type="FunFam" id="3.10.100.10:FF:000002">
    <property type="entry name" value="Hyaluronan proteoglycan link protein 1"/>
    <property type="match status" value="1"/>
</dbReference>
<dbReference type="FunFam" id="2.10.70.10:FF:000003">
    <property type="entry name" value="Versican core protein"/>
    <property type="match status" value="1"/>
</dbReference>
<dbReference type="FunFam" id="3.10.100.10:FF:000003">
    <property type="entry name" value="Versican core protein"/>
    <property type="match status" value="1"/>
</dbReference>
<dbReference type="Gene3D" id="2.10.70.10">
    <property type="entry name" value="Complement Module, domain 1"/>
    <property type="match status" value="1"/>
</dbReference>
<dbReference type="Gene3D" id="2.60.40.10">
    <property type="entry name" value="Immunoglobulins"/>
    <property type="match status" value="1"/>
</dbReference>
<dbReference type="Gene3D" id="2.10.25.10">
    <property type="entry name" value="Laminin"/>
    <property type="match status" value="1"/>
</dbReference>
<dbReference type="Gene3D" id="3.10.100.10">
    <property type="entry name" value="Mannose-Binding Protein A, subunit A"/>
    <property type="match status" value="3"/>
</dbReference>
<dbReference type="InterPro" id="IPR001304">
    <property type="entry name" value="C-type_lectin-like"/>
</dbReference>
<dbReference type="InterPro" id="IPR016186">
    <property type="entry name" value="C-type_lectin-like/link_sf"/>
</dbReference>
<dbReference type="InterPro" id="IPR018378">
    <property type="entry name" value="C-type_lectin_CS"/>
</dbReference>
<dbReference type="InterPro" id="IPR016187">
    <property type="entry name" value="CTDL_fold"/>
</dbReference>
<dbReference type="InterPro" id="IPR000742">
    <property type="entry name" value="EGF-like_dom"/>
</dbReference>
<dbReference type="InterPro" id="IPR050691">
    <property type="entry name" value="Hyaluronan_bind_Proteoglycan"/>
</dbReference>
<dbReference type="InterPro" id="IPR007110">
    <property type="entry name" value="Ig-like_dom"/>
</dbReference>
<dbReference type="InterPro" id="IPR036179">
    <property type="entry name" value="Ig-like_dom_sf"/>
</dbReference>
<dbReference type="InterPro" id="IPR013783">
    <property type="entry name" value="Ig-like_fold"/>
</dbReference>
<dbReference type="InterPro" id="IPR003006">
    <property type="entry name" value="Ig/MHC_CS"/>
</dbReference>
<dbReference type="InterPro" id="IPR003599">
    <property type="entry name" value="Ig_sub"/>
</dbReference>
<dbReference type="InterPro" id="IPR013106">
    <property type="entry name" value="Ig_V-set"/>
</dbReference>
<dbReference type="InterPro" id="IPR000538">
    <property type="entry name" value="Link_dom"/>
</dbReference>
<dbReference type="InterPro" id="IPR035976">
    <property type="entry name" value="Sushi/SCR/CCP_sf"/>
</dbReference>
<dbReference type="InterPro" id="IPR000436">
    <property type="entry name" value="Sushi_SCR_CCP_dom"/>
</dbReference>
<dbReference type="PANTHER" id="PTHR22804">
    <property type="entry name" value="AGGRECAN/VERSICAN PROTEOGLYCAN"/>
    <property type="match status" value="1"/>
</dbReference>
<dbReference type="PANTHER" id="PTHR22804:SF41">
    <property type="entry name" value="BREVICAN CORE PROTEIN"/>
    <property type="match status" value="1"/>
</dbReference>
<dbReference type="Pfam" id="PF00008">
    <property type="entry name" value="EGF"/>
    <property type="match status" value="1"/>
</dbReference>
<dbReference type="Pfam" id="PF00059">
    <property type="entry name" value="Lectin_C"/>
    <property type="match status" value="1"/>
</dbReference>
<dbReference type="Pfam" id="PF00084">
    <property type="entry name" value="Sushi"/>
    <property type="match status" value="1"/>
</dbReference>
<dbReference type="Pfam" id="PF07686">
    <property type="entry name" value="V-set"/>
    <property type="match status" value="1"/>
</dbReference>
<dbReference type="Pfam" id="PF00193">
    <property type="entry name" value="Xlink"/>
    <property type="match status" value="2"/>
</dbReference>
<dbReference type="PRINTS" id="PR01265">
    <property type="entry name" value="LINKMODULE"/>
</dbReference>
<dbReference type="SMART" id="SM00032">
    <property type="entry name" value="CCP"/>
    <property type="match status" value="1"/>
</dbReference>
<dbReference type="SMART" id="SM00034">
    <property type="entry name" value="CLECT"/>
    <property type="match status" value="1"/>
</dbReference>
<dbReference type="SMART" id="SM00181">
    <property type="entry name" value="EGF"/>
    <property type="match status" value="1"/>
</dbReference>
<dbReference type="SMART" id="SM00409">
    <property type="entry name" value="IG"/>
    <property type="match status" value="1"/>
</dbReference>
<dbReference type="SMART" id="SM00406">
    <property type="entry name" value="IGv"/>
    <property type="match status" value="1"/>
</dbReference>
<dbReference type="SMART" id="SM00445">
    <property type="entry name" value="LINK"/>
    <property type="match status" value="2"/>
</dbReference>
<dbReference type="SUPFAM" id="SSF56436">
    <property type="entry name" value="C-type lectin-like"/>
    <property type="match status" value="3"/>
</dbReference>
<dbReference type="SUPFAM" id="SSF57535">
    <property type="entry name" value="Complement control module/SCR domain"/>
    <property type="match status" value="1"/>
</dbReference>
<dbReference type="SUPFAM" id="SSF48726">
    <property type="entry name" value="Immunoglobulin"/>
    <property type="match status" value="1"/>
</dbReference>
<dbReference type="PROSITE" id="PS00615">
    <property type="entry name" value="C_TYPE_LECTIN_1"/>
    <property type="match status" value="1"/>
</dbReference>
<dbReference type="PROSITE" id="PS50041">
    <property type="entry name" value="C_TYPE_LECTIN_2"/>
    <property type="match status" value="1"/>
</dbReference>
<dbReference type="PROSITE" id="PS00022">
    <property type="entry name" value="EGF_1"/>
    <property type="match status" value="1"/>
</dbReference>
<dbReference type="PROSITE" id="PS01186">
    <property type="entry name" value="EGF_2"/>
    <property type="match status" value="1"/>
</dbReference>
<dbReference type="PROSITE" id="PS50026">
    <property type="entry name" value="EGF_3"/>
    <property type="match status" value="1"/>
</dbReference>
<dbReference type="PROSITE" id="PS50835">
    <property type="entry name" value="IG_LIKE"/>
    <property type="match status" value="1"/>
</dbReference>
<dbReference type="PROSITE" id="PS00290">
    <property type="entry name" value="IG_MHC"/>
    <property type="match status" value="1"/>
</dbReference>
<dbReference type="PROSITE" id="PS01241">
    <property type="entry name" value="LINK_1"/>
    <property type="match status" value="2"/>
</dbReference>
<dbReference type="PROSITE" id="PS50963">
    <property type="entry name" value="LINK_2"/>
    <property type="match status" value="2"/>
</dbReference>
<dbReference type="PROSITE" id="PS50923">
    <property type="entry name" value="SUSHI"/>
    <property type="match status" value="1"/>
</dbReference>
<comment type="function">
    <text>May play a role in the terminally differentiating and the adult nervous system during postnatal development. Could stabilize interactions between hyaluronan (HA) and brain proteoglycans. Isoform 2 may function as a chondroitin sulfate-bearing cell surface receptor.</text>
</comment>
<comment type="subunit">
    <text evidence="9">Interacts with TNR.</text>
</comment>
<comment type="subcellular location">
    <subcellularLocation>
        <location evidence="2">Secreted</location>
    </subcellularLocation>
</comment>
<comment type="subcellular location">
    <molecule>Isoform 1</molecule>
    <subcellularLocation>
        <location>Secreted</location>
        <location>Extracellular space</location>
        <location>Extracellular matrix</location>
    </subcellularLocation>
</comment>
<comment type="subcellular location">
    <molecule>Isoform 2</molecule>
    <subcellularLocation>
        <location>Membrane</location>
        <topology>Lipid-anchor</topology>
        <topology>GPI-anchor</topology>
    </subcellularLocation>
</comment>
<comment type="alternative products">
    <event type="alternative splicing"/>
    <isoform>
        <id>P55068-1</id>
        <name>1</name>
        <sequence type="displayed"/>
    </isoform>
    <isoform>
        <id>P55068-2</id>
        <name>2</name>
        <sequence type="described" ref="VSP_003076 VSP_003077"/>
    </isoform>
</comment>
<comment type="tissue specificity">
    <text>Brain.</text>
</comment>
<comment type="developmental stage">
    <text>Isoform 1 increases from day P4 to P64. Isoform 2 increases after day P8.</text>
</comment>
<comment type="PTM">
    <text evidence="2">O-glycosylated; contains chondroitin sulfate.</text>
</comment>
<comment type="similarity">
    <text evidence="10">Belongs to the aggrecan/versican proteoglycan family.</text>
</comment>
<comment type="sequence caution" evidence="10">
    <conflict type="frameshift">
        <sequence resource="EMBL-CDS" id="CAA82215"/>
    </conflict>
</comment>
<name>PGCB_RAT</name>
<sequence>MIPLLLSLLAALVLTQAPAALADDLKEDSSEDRAFRVRIGAAQLRGVLGGALAIPCHVHHLRPPPSRRAAPGFPRVKWTFLSGDREVEVLVARGLRVKVNEAYRFRVALPAYPASLTDVSLVLSELRPNDSGVYRCEVQHGIDDSSDAVEVKVKGVVFLYREGSARYAFSFAGAQEACARIGARIATPEQLYAAYLGGYEQCDAGWLSDQTVRYPIQNPREACYGDMDGYPGVRNYGVVGPDDLYDVYCYAEDLNGELFLGAPPGKLTWEEARDYCLERGAQIASTGQLYAAWNGGLDRCSPGWLADGSVRYPIITPSQRCGGGLPGVKTLFLFPNQTGFPSKQNRFNVYCFRDSAHPSAFSEASSPASDGLEAIVTVTEKLEELQLPQEAVESESRGAIYSIPITEDGGGGSSTPEDPAEAPRTPLESETQSVAPPTGSSEEEGEALEEEERFKDTETPKEEKEQENLWVWPTELSSPLPTGLETEHSLSQVSPPAQAVLQVGASPSPRPPRVHGPTVETLQPPGEGSLTSTPDGAREVGGETGSPELSGVPREREEAGSSSLEDGPSLLPETWAPVGTREVETPSEEKSGRTVLTGTSVQAQPVLPTDSASRGGVAVAPSSGDCIPSPCHNGGTCLEEKEGFRCLCVPGYGGDLCDVGLHFCSPGWEPFQGACYKHFSTRRSWEEAESQCRALGAHLTSICTPEEQDFVNDRYREYQWIGLNDRTIEGDFLWSDGPPLLYENWNPGQPDSYFLSGENCVVMVWHDQGQWSDVPCNYHLSYTCKMGLVSCGPPPQLPLAQIFGRPRLRYAVDTVLRYRCRDGLAQRNLPLIRCQENGLWEAPQISCVPRRPARALRSMTAPEGPRGQLPRQRKALLTPPSSL</sequence>
<organism>
    <name type="scientific">Rattus norvegicus</name>
    <name type="common">Rat</name>
    <dbReference type="NCBI Taxonomy" id="10116"/>
    <lineage>
        <taxon>Eukaryota</taxon>
        <taxon>Metazoa</taxon>
        <taxon>Chordata</taxon>
        <taxon>Craniata</taxon>
        <taxon>Vertebrata</taxon>
        <taxon>Euteleostomi</taxon>
        <taxon>Mammalia</taxon>
        <taxon>Eutheria</taxon>
        <taxon>Euarchontoglires</taxon>
        <taxon>Glires</taxon>
        <taxon>Rodentia</taxon>
        <taxon>Myomorpha</taxon>
        <taxon>Muroidea</taxon>
        <taxon>Muridae</taxon>
        <taxon>Murinae</taxon>
        <taxon>Rattus</taxon>
    </lineage>
</organism>
<reference key="1">
    <citation type="journal article" date="1995" name="J. Biol. Chem.">
        <title>Brevican, a chondroitin sulfate proteoglycan of rat brain, occurs as secreted and cell surface glycosylphosphatidylinositol-anchored isoforms.</title>
        <authorList>
            <person name="Seidenbecher C.I."/>
            <person name="Richter K."/>
            <person name="Rauch U."/>
            <person name="Faessler R."/>
            <person name="Garner C.C."/>
            <person name="Gundelfinger E.D."/>
        </authorList>
    </citation>
    <scope>NUCLEOTIDE SEQUENCE [MRNA]</scope>
    <scope>GPI-ANCHOR AT SER-622 (ISOFORM 2)</scope>
    <source>
        <strain>Sprague-Dawley</strain>
        <tissue>Brain</tissue>
    </source>
</reference>
<reference key="2">
    <citation type="journal article" date="1995" name="Biochem. Biophys. Res. Commun.">
        <title>cDNA cloning and the identification of an aggrecanase-like cleavage site in rat brevican.</title>
        <authorList>
            <person name="Yamada H."/>
            <person name="Watanabe K."/>
            <person name="Shimonaka M."/>
            <person name="Yamasaki M."/>
            <person name="Yamaguchi Y."/>
        </authorList>
    </citation>
    <scope>NUCLEOTIDE SEQUENCE [MRNA]</scope>
    <scope>PROTEIN SEQUENCE OF 396-407</scope>
    <source>
        <tissue>Brain</tissue>
    </source>
</reference>
<reference key="3">
    <citation type="journal article" date="1997" name="Proc. Natl. Acad. Sci. U.S.A.">
        <title>The C-type lectin domains of lecticans, a family of aggregating chondroitin sulfate proteoglycans, bind tenascin-R by protein-protein interactions independent of carbohydrate moiety.</title>
        <authorList>
            <person name="Aspberg A."/>
            <person name="Miura R."/>
            <person name="Bourdoulous S."/>
            <person name="Shimonaka M."/>
            <person name="Heinegard D."/>
            <person name="Schachner M."/>
            <person name="Ruoslahti E."/>
            <person name="Yamaguchi Y."/>
        </authorList>
    </citation>
    <scope>INTERACTION WITH TNR</scope>
</reference>
<reference key="4">
    <citation type="journal article" date="1994" name="J. Cell Biol.">
        <title>BEHAB, a new member of the proteoglycan tandem repeat family of hyaluronan-binding proteins that is restricted to the brain.</title>
        <authorList>
            <person name="Jaworski D.M."/>
            <person name="Kelly G.M."/>
            <person name="Hockfield S."/>
        </authorList>
    </citation>
    <scope>NUCLEOTIDE SEQUENCE [MRNA] OF 1-423</scope>
    <source>
        <strain>Sprague-Dawley</strain>
        <tissue>Brain</tissue>
    </source>
</reference>
<reference key="5">
    <citation type="journal article" date="2012" name="Nat. Commun.">
        <title>Quantitative maps of protein phosphorylation sites across 14 different rat organs and tissues.</title>
        <authorList>
            <person name="Lundby A."/>
            <person name="Secher A."/>
            <person name="Lage K."/>
            <person name="Nordsborg N.B."/>
            <person name="Dmytriyev A."/>
            <person name="Lundby C."/>
            <person name="Olsen J.V."/>
        </authorList>
    </citation>
    <scope>PHOSPHORYLATION [LARGE SCALE ANALYSIS] AT SER-413</scope>
    <scope>IDENTIFICATION BY MASS SPECTROMETRY [LARGE SCALE ANALYSIS]</scope>
</reference>
<keyword id="KW-0025">Alternative splicing</keyword>
<keyword id="KW-0903">Direct protein sequencing</keyword>
<keyword id="KW-1015">Disulfide bond</keyword>
<keyword id="KW-0245">EGF-like domain</keyword>
<keyword id="KW-0272">Extracellular matrix</keyword>
<keyword id="KW-0325">Glycoprotein</keyword>
<keyword id="KW-0336">GPI-anchor</keyword>
<keyword id="KW-0373">Hyaluronic acid</keyword>
<keyword id="KW-0393">Immunoglobulin domain</keyword>
<keyword id="KW-0430">Lectin</keyword>
<keyword id="KW-0449">Lipoprotein</keyword>
<keyword id="KW-0472">Membrane</keyword>
<keyword id="KW-0597">Phosphoprotein</keyword>
<keyword id="KW-0654">Proteoglycan</keyword>
<keyword id="KW-1185">Reference proteome</keyword>
<keyword id="KW-0677">Repeat</keyword>
<keyword id="KW-0964">Secreted</keyword>
<keyword id="KW-0732">Signal</keyword>
<keyword id="KW-0768">Sushi</keyword>
<protein>
    <recommendedName>
        <fullName>Brevican core protein</fullName>
    </recommendedName>
    <alternativeName>
        <fullName>Brain-enriched hyaluronan-binding protein</fullName>
        <shortName>BEHAB</shortName>
    </alternativeName>
</protein>